<dbReference type="EC" id="2.4.2.1" evidence="1"/>
<dbReference type="EC" id="2.4.2.2" evidence="1"/>
<dbReference type="EMBL" id="CP000615">
    <property type="protein sequence ID" value="ABO58028.1"/>
    <property type="molecule type" value="Genomic_DNA"/>
</dbReference>
<dbReference type="SMR" id="A4JP25"/>
<dbReference type="KEGG" id="bvi:Bcep1808_5077"/>
<dbReference type="eggNOG" id="COG3123">
    <property type="taxonomic scope" value="Bacteria"/>
</dbReference>
<dbReference type="HOGENOM" id="CLU_157874_1_0_4"/>
<dbReference type="Proteomes" id="UP000002287">
    <property type="component" value="Chromosome 2"/>
</dbReference>
<dbReference type="GO" id="GO:0005829">
    <property type="term" value="C:cytosol"/>
    <property type="evidence" value="ECO:0007669"/>
    <property type="project" value="TreeGrafter"/>
</dbReference>
<dbReference type="GO" id="GO:0047975">
    <property type="term" value="F:guanosine phosphorylase activity"/>
    <property type="evidence" value="ECO:0007669"/>
    <property type="project" value="UniProtKB-EC"/>
</dbReference>
<dbReference type="GO" id="GO:0004731">
    <property type="term" value="F:purine-nucleoside phosphorylase activity"/>
    <property type="evidence" value="ECO:0007669"/>
    <property type="project" value="UniProtKB-UniRule"/>
</dbReference>
<dbReference type="GO" id="GO:0009032">
    <property type="term" value="F:thymidine phosphorylase activity"/>
    <property type="evidence" value="ECO:0007669"/>
    <property type="project" value="UniProtKB-EC"/>
</dbReference>
<dbReference type="GO" id="GO:0004850">
    <property type="term" value="F:uridine phosphorylase activity"/>
    <property type="evidence" value="ECO:0007669"/>
    <property type="project" value="UniProtKB-EC"/>
</dbReference>
<dbReference type="CDD" id="cd20296">
    <property type="entry name" value="cupin_PpnP-like"/>
    <property type="match status" value="1"/>
</dbReference>
<dbReference type="Gene3D" id="2.60.120.10">
    <property type="entry name" value="Jelly Rolls"/>
    <property type="match status" value="1"/>
</dbReference>
<dbReference type="HAMAP" id="MF_01537">
    <property type="entry name" value="Nucleos_phosphorylase_PpnP"/>
    <property type="match status" value="1"/>
</dbReference>
<dbReference type="InterPro" id="IPR009664">
    <property type="entry name" value="Ppnp"/>
</dbReference>
<dbReference type="InterPro" id="IPR014710">
    <property type="entry name" value="RmlC-like_jellyroll"/>
</dbReference>
<dbReference type="InterPro" id="IPR011051">
    <property type="entry name" value="RmlC_Cupin_sf"/>
</dbReference>
<dbReference type="PANTHER" id="PTHR36540">
    <property type="entry name" value="PYRIMIDINE/PURINE NUCLEOSIDE PHOSPHORYLASE"/>
    <property type="match status" value="1"/>
</dbReference>
<dbReference type="PANTHER" id="PTHR36540:SF1">
    <property type="entry name" value="PYRIMIDINE_PURINE NUCLEOSIDE PHOSPHORYLASE"/>
    <property type="match status" value="1"/>
</dbReference>
<dbReference type="Pfam" id="PF06865">
    <property type="entry name" value="Ppnp"/>
    <property type="match status" value="1"/>
</dbReference>
<dbReference type="SUPFAM" id="SSF51182">
    <property type="entry name" value="RmlC-like cupins"/>
    <property type="match status" value="1"/>
</dbReference>
<accession>A4JP25</accession>
<feature type="chain" id="PRO_1000068727" description="Pyrimidine/purine nucleoside phosphorylase">
    <location>
        <begin position="1"/>
        <end position="106"/>
    </location>
</feature>
<gene>
    <name evidence="1" type="primary">ppnP</name>
    <name type="ordered locus">Bcep1808_5077</name>
</gene>
<sequence length="106" mass="11536">MTSATQFDNVSVVKRANVYFDGKCVSHTVLFPDGTRKTLGVILPCALNFGTDAPELMEVQAGKCRVKLAGSSEWQTYGAGESFSVPGNSRFDIEVLDTLDYVCSYL</sequence>
<protein>
    <recommendedName>
        <fullName evidence="1">Pyrimidine/purine nucleoside phosphorylase</fullName>
        <ecNumber evidence="1">2.4.2.1</ecNumber>
        <ecNumber evidence="1">2.4.2.2</ecNumber>
    </recommendedName>
    <alternativeName>
        <fullName evidence="1">Adenosine phosphorylase</fullName>
    </alternativeName>
    <alternativeName>
        <fullName evidence="1">Cytidine phosphorylase</fullName>
    </alternativeName>
    <alternativeName>
        <fullName evidence="1">Guanosine phosphorylase</fullName>
    </alternativeName>
    <alternativeName>
        <fullName evidence="1">Inosine phosphorylase</fullName>
    </alternativeName>
    <alternativeName>
        <fullName evidence="1">Thymidine phosphorylase</fullName>
    </alternativeName>
    <alternativeName>
        <fullName evidence="1">Uridine phosphorylase</fullName>
    </alternativeName>
    <alternativeName>
        <fullName evidence="1">Xanthosine phosphorylase</fullName>
    </alternativeName>
</protein>
<reference key="1">
    <citation type="submission" date="2007-03" db="EMBL/GenBank/DDBJ databases">
        <title>Complete sequence of chromosome 2 of Burkholderia vietnamiensis G4.</title>
        <authorList>
            <consortium name="US DOE Joint Genome Institute"/>
            <person name="Copeland A."/>
            <person name="Lucas S."/>
            <person name="Lapidus A."/>
            <person name="Barry K."/>
            <person name="Detter J.C."/>
            <person name="Glavina del Rio T."/>
            <person name="Hammon N."/>
            <person name="Israni S."/>
            <person name="Dalin E."/>
            <person name="Tice H."/>
            <person name="Pitluck S."/>
            <person name="Chain P."/>
            <person name="Malfatti S."/>
            <person name="Shin M."/>
            <person name="Vergez L."/>
            <person name="Schmutz J."/>
            <person name="Larimer F."/>
            <person name="Land M."/>
            <person name="Hauser L."/>
            <person name="Kyrpides N."/>
            <person name="Tiedje J."/>
            <person name="Richardson P."/>
        </authorList>
    </citation>
    <scope>NUCLEOTIDE SEQUENCE [LARGE SCALE GENOMIC DNA]</scope>
    <source>
        <strain>G4 / LMG 22486</strain>
    </source>
</reference>
<evidence type="ECO:0000255" key="1">
    <source>
        <dbReference type="HAMAP-Rule" id="MF_01537"/>
    </source>
</evidence>
<proteinExistence type="inferred from homology"/>
<name>PPNP_BURVG</name>
<keyword id="KW-0328">Glycosyltransferase</keyword>
<keyword id="KW-0808">Transferase</keyword>
<comment type="function">
    <text evidence="1">Catalyzes the phosphorolysis of diverse nucleosides, yielding D-ribose 1-phosphate and the respective free bases. Can use uridine, adenosine, guanosine, cytidine, thymidine, inosine and xanthosine as substrates. Also catalyzes the reverse reactions.</text>
</comment>
<comment type="catalytic activity">
    <reaction evidence="1">
        <text>a purine D-ribonucleoside + phosphate = a purine nucleobase + alpha-D-ribose 1-phosphate</text>
        <dbReference type="Rhea" id="RHEA:19805"/>
        <dbReference type="ChEBI" id="CHEBI:26386"/>
        <dbReference type="ChEBI" id="CHEBI:43474"/>
        <dbReference type="ChEBI" id="CHEBI:57720"/>
        <dbReference type="ChEBI" id="CHEBI:142355"/>
        <dbReference type="EC" id="2.4.2.1"/>
    </reaction>
</comment>
<comment type="catalytic activity">
    <reaction evidence="1">
        <text>adenosine + phosphate = alpha-D-ribose 1-phosphate + adenine</text>
        <dbReference type="Rhea" id="RHEA:27642"/>
        <dbReference type="ChEBI" id="CHEBI:16335"/>
        <dbReference type="ChEBI" id="CHEBI:16708"/>
        <dbReference type="ChEBI" id="CHEBI:43474"/>
        <dbReference type="ChEBI" id="CHEBI:57720"/>
        <dbReference type="EC" id="2.4.2.1"/>
    </reaction>
</comment>
<comment type="catalytic activity">
    <reaction evidence="1">
        <text>cytidine + phosphate = cytosine + alpha-D-ribose 1-phosphate</text>
        <dbReference type="Rhea" id="RHEA:52540"/>
        <dbReference type="ChEBI" id="CHEBI:16040"/>
        <dbReference type="ChEBI" id="CHEBI:17562"/>
        <dbReference type="ChEBI" id="CHEBI:43474"/>
        <dbReference type="ChEBI" id="CHEBI:57720"/>
        <dbReference type="EC" id="2.4.2.2"/>
    </reaction>
</comment>
<comment type="catalytic activity">
    <reaction evidence="1">
        <text>guanosine + phosphate = alpha-D-ribose 1-phosphate + guanine</text>
        <dbReference type="Rhea" id="RHEA:13233"/>
        <dbReference type="ChEBI" id="CHEBI:16235"/>
        <dbReference type="ChEBI" id="CHEBI:16750"/>
        <dbReference type="ChEBI" id="CHEBI:43474"/>
        <dbReference type="ChEBI" id="CHEBI:57720"/>
        <dbReference type="EC" id="2.4.2.1"/>
    </reaction>
</comment>
<comment type="catalytic activity">
    <reaction evidence="1">
        <text>inosine + phosphate = alpha-D-ribose 1-phosphate + hypoxanthine</text>
        <dbReference type="Rhea" id="RHEA:27646"/>
        <dbReference type="ChEBI" id="CHEBI:17368"/>
        <dbReference type="ChEBI" id="CHEBI:17596"/>
        <dbReference type="ChEBI" id="CHEBI:43474"/>
        <dbReference type="ChEBI" id="CHEBI:57720"/>
        <dbReference type="EC" id="2.4.2.1"/>
    </reaction>
</comment>
<comment type="catalytic activity">
    <reaction evidence="1">
        <text>thymidine + phosphate = 2-deoxy-alpha-D-ribose 1-phosphate + thymine</text>
        <dbReference type="Rhea" id="RHEA:16037"/>
        <dbReference type="ChEBI" id="CHEBI:17748"/>
        <dbReference type="ChEBI" id="CHEBI:17821"/>
        <dbReference type="ChEBI" id="CHEBI:43474"/>
        <dbReference type="ChEBI" id="CHEBI:57259"/>
        <dbReference type="EC" id="2.4.2.2"/>
    </reaction>
</comment>
<comment type="catalytic activity">
    <reaction evidence="1">
        <text>uridine + phosphate = alpha-D-ribose 1-phosphate + uracil</text>
        <dbReference type="Rhea" id="RHEA:24388"/>
        <dbReference type="ChEBI" id="CHEBI:16704"/>
        <dbReference type="ChEBI" id="CHEBI:17568"/>
        <dbReference type="ChEBI" id="CHEBI:43474"/>
        <dbReference type="ChEBI" id="CHEBI:57720"/>
        <dbReference type="EC" id="2.4.2.2"/>
    </reaction>
</comment>
<comment type="catalytic activity">
    <reaction evidence="1">
        <text>xanthosine + phosphate = alpha-D-ribose 1-phosphate + xanthine</text>
        <dbReference type="Rhea" id="RHEA:27638"/>
        <dbReference type="ChEBI" id="CHEBI:17712"/>
        <dbReference type="ChEBI" id="CHEBI:18107"/>
        <dbReference type="ChEBI" id="CHEBI:43474"/>
        <dbReference type="ChEBI" id="CHEBI:57720"/>
        <dbReference type="EC" id="2.4.2.1"/>
    </reaction>
</comment>
<comment type="similarity">
    <text evidence="1">Belongs to the nucleoside phosphorylase PpnP family.</text>
</comment>
<organism>
    <name type="scientific">Burkholderia vietnamiensis (strain G4 / LMG 22486)</name>
    <name type="common">Burkholderia cepacia (strain R1808)</name>
    <dbReference type="NCBI Taxonomy" id="269482"/>
    <lineage>
        <taxon>Bacteria</taxon>
        <taxon>Pseudomonadati</taxon>
        <taxon>Pseudomonadota</taxon>
        <taxon>Betaproteobacteria</taxon>
        <taxon>Burkholderiales</taxon>
        <taxon>Burkholderiaceae</taxon>
        <taxon>Burkholderia</taxon>
        <taxon>Burkholderia cepacia complex</taxon>
    </lineage>
</organism>